<keyword id="KW-0597">Phosphoprotein</keyword>
<keyword id="KW-1185">Reference proteome</keyword>
<feature type="chain" id="PRO_0000263661" description="Small acidic protein">
    <location>
        <begin position="1"/>
        <end position="171"/>
    </location>
</feature>
<feature type="region of interest" description="Disordered" evidence="1">
    <location>
        <begin position="1"/>
        <end position="171"/>
    </location>
</feature>
<feature type="compositionally biased region" description="Polar residues" evidence="1">
    <location>
        <begin position="19"/>
        <end position="29"/>
    </location>
</feature>
<feature type="compositionally biased region" description="Basic and acidic residues" evidence="1">
    <location>
        <begin position="46"/>
        <end position="80"/>
    </location>
</feature>
<feature type="compositionally biased region" description="Low complexity" evidence="1">
    <location>
        <begin position="117"/>
        <end position="128"/>
    </location>
</feature>
<feature type="compositionally biased region" description="Basic and acidic residues" evidence="1">
    <location>
        <begin position="133"/>
        <end position="160"/>
    </location>
</feature>
<feature type="modified residue" description="Phosphoserine" evidence="2">
    <location>
        <position position="16"/>
    </location>
</feature>
<feature type="modified residue" description="Phosphothreonine" evidence="2">
    <location>
        <position position="20"/>
    </location>
</feature>
<feature type="modified residue" description="Phosphothreonine" evidence="2">
    <location>
        <position position="23"/>
    </location>
</feature>
<comment type="similarity">
    <text evidence="3">Belongs to the SMAP family.</text>
</comment>
<name>SMAP_DANRE</name>
<dbReference type="EMBL" id="BC045914">
    <property type="protein sequence ID" value="AAH45914.1"/>
    <property type="molecule type" value="mRNA"/>
</dbReference>
<dbReference type="RefSeq" id="NP_956488.1">
    <property type="nucleotide sequence ID" value="NM_200194.1"/>
</dbReference>
<dbReference type="FunCoup" id="Q7ZVC9">
    <property type="interactions" value="1380"/>
</dbReference>
<dbReference type="STRING" id="7955.ENSDARP00000034658"/>
<dbReference type="iPTMnet" id="Q7ZVC9"/>
<dbReference type="PaxDb" id="7955-ENSDARP00000034658"/>
<dbReference type="GeneID" id="393163"/>
<dbReference type="KEGG" id="dre:393163"/>
<dbReference type="AGR" id="ZFIN:ZDB-GENE-040426-904"/>
<dbReference type="ZFIN" id="ZDB-GENE-040426-904">
    <property type="gene designation" value="zgc:56106"/>
</dbReference>
<dbReference type="eggNOG" id="ENOG502RXI1">
    <property type="taxonomic scope" value="Eukaryota"/>
</dbReference>
<dbReference type="InParanoid" id="Q7ZVC9"/>
<dbReference type="OrthoDB" id="10066125at2759"/>
<dbReference type="PhylomeDB" id="Q7ZVC9"/>
<dbReference type="PRO" id="PR:Q7ZVC9"/>
<dbReference type="Proteomes" id="UP000000437">
    <property type="component" value="Chromosome 18"/>
</dbReference>
<dbReference type="InterPro" id="IPR026714">
    <property type="entry name" value="SMAP"/>
</dbReference>
<dbReference type="InterPro" id="IPR028124">
    <property type="entry name" value="SMAP_dom"/>
</dbReference>
<dbReference type="PANTHER" id="PTHR22175:SF0">
    <property type="entry name" value="SMALL ACIDIC PROTEIN"/>
    <property type="match status" value="1"/>
</dbReference>
<dbReference type="PANTHER" id="PTHR22175">
    <property type="entry name" value="SMALL ACIDIC PROTEIN-RELATED"/>
    <property type="match status" value="1"/>
</dbReference>
<dbReference type="Pfam" id="PF15477">
    <property type="entry name" value="SMAP"/>
    <property type="match status" value="1"/>
</dbReference>
<sequence>MSSSDEPCKGTKRPASPDETGSTQWQSADLGTDERKQKFLRLMGAGKKEHTGRLVIGDHKSTSHFRSGAEDRRMNADLEHQYQQSLDGKLSGRNRRHCGLGFSEPDEVAESPNAAVSETSNSSETPPEQVSETQKEEKPPASDTELEKPEPHTHSKEDKKKTLKMAFVKST</sequence>
<gene>
    <name type="primary">smap</name>
    <name type="ORF">zgc:56106</name>
</gene>
<evidence type="ECO:0000256" key="1">
    <source>
        <dbReference type="SAM" id="MobiDB-lite"/>
    </source>
</evidence>
<evidence type="ECO:0000269" key="2">
    <source>
    </source>
</evidence>
<evidence type="ECO:0000305" key="3"/>
<protein>
    <recommendedName>
        <fullName>Small acidic protein</fullName>
    </recommendedName>
</protein>
<organism>
    <name type="scientific">Danio rerio</name>
    <name type="common">Zebrafish</name>
    <name type="synonym">Brachydanio rerio</name>
    <dbReference type="NCBI Taxonomy" id="7955"/>
    <lineage>
        <taxon>Eukaryota</taxon>
        <taxon>Metazoa</taxon>
        <taxon>Chordata</taxon>
        <taxon>Craniata</taxon>
        <taxon>Vertebrata</taxon>
        <taxon>Euteleostomi</taxon>
        <taxon>Actinopterygii</taxon>
        <taxon>Neopterygii</taxon>
        <taxon>Teleostei</taxon>
        <taxon>Ostariophysi</taxon>
        <taxon>Cypriniformes</taxon>
        <taxon>Danionidae</taxon>
        <taxon>Danioninae</taxon>
        <taxon>Danio</taxon>
    </lineage>
</organism>
<accession>Q7ZVC9</accession>
<proteinExistence type="evidence at protein level"/>
<reference key="1">
    <citation type="submission" date="2003-01" db="EMBL/GenBank/DDBJ databases">
        <authorList>
            <consortium name="NIH - Zebrafish Gene Collection (ZGC) project"/>
        </authorList>
    </citation>
    <scope>NUCLEOTIDE SEQUENCE [LARGE SCALE MRNA]</scope>
    <source>
        <strain>SJD</strain>
    </source>
</reference>
<reference key="2">
    <citation type="journal article" date="2008" name="J. Proteome Res.">
        <title>Online automated in vivo zebrafish phosphoproteomics: from large-scale analysis down to a single embryo.</title>
        <authorList>
            <person name="Lemeer S."/>
            <person name="Pinkse M.W.H."/>
            <person name="Mohammed S."/>
            <person name="van Breukelen B."/>
            <person name="den Hertog J."/>
            <person name="Slijper M."/>
            <person name="Heck A.J.R."/>
        </authorList>
    </citation>
    <scope>PHOSPHORYLATION [LARGE SCALE ANALYSIS] AT SER-16; THR-20 AND THR-23</scope>
    <scope>IDENTIFICATION BY MASS SPECTROMETRY</scope>
    <source>
        <tissue>Embryo</tissue>
    </source>
</reference>